<organism>
    <name type="scientific">Halalkalibacterium halodurans (strain ATCC BAA-125 / DSM 18197 / FERM 7344 / JCM 9153 / C-125)</name>
    <name type="common">Bacillus halodurans</name>
    <dbReference type="NCBI Taxonomy" id="272558"/>
    <lineage>
        <taxon>Bacteria</taxon>
        <taxon>Bacillati</taxon>
        <taxon>Bacillota</taxon>
        <taxon>Bacilli</taxon>
        <taxon>Bacillales</taxon>
        <taxon>Bacillaceae</taxon>
        <taxon>Halalkalibacterium (ex Joshi et al. 2022)</taxon>
    </lineage>
</organism>
<protein>
    <recommendedName>
        <fullName evidence="1">tRNA pseudouridine synthase B</fullName>
        <ecNumber evidence="1">5.4.99.25</ecNumber>
    </recommendedName>
    <alternativeName>
        <fullName evidence="1">tRNA pseudouridine(55) synthase</fullName>
        <shortName evidence="1">Psi55 synthase</shortName>
    </alternativeName>
    <alternativeName>
        <fullName evidence="1">tRNA pseudouridylate synthase</fullName>
    </alternativeName>
    <alternativeName>
        <fullName evidence="1">tRNA-uridine isomerase</fullName>
    </alternativeName>
</protein>
<dbReference type="EC" id="5.4.99.25" evidence="1"/>
<dbReference type="EMBL" id="BA000004">
    <property type="protein sequence ID" value="BAB06129.1"/>
    <property type="molecule type" value="Genomic_DNA"/>
</dbReference>
<dbReference type="PIR" id="B83951">
    <property type="entry name" value="B83951"/>
</dbReference>
<dbReference type="RefSeq" id="WP_010898563.1">
    <property type="nucleotide sequence ID" value="NC_002570.2"/>
</dbReference>
<dbReference type="SMR" id="Q9KA80"/>
<dbReference type="STRING" id="272558.gene:10728308"/>
<dbReference type="KEGG" id="bha:BH2410"/>
<dbReference type="eggNOG" id="COG0130">
    <property type="taxonomic scope" value="Bacteria"/>
</dbReference>
<dbReference type="HOGENOM" id="CLU_032087_0_1_9"/>
<dbReference type="Proteomes" id="UP000001258">
    <property type="component" value="Chromosome"/>
</dbReference>
<dbReference type="GO" id="GO:0003723">
    <property type="term" value="F:RNA binding"/>
    <property type="evidence" value="ECO:0007669"/>
    <property type="project" value="InterPro"/>
</dbReference>
<dbReference type="GO" id="GO:0160148">
    <property type="term" value="F:tRNA pseudouridine(55) synthase activity"/>
    <property type="evidence" value="ECO:0007669"/>
    <property type="project" value="UniProtKB-EC"/>
</dbReference>
<dbReference type="GO" id="GO:1990481">
    <property type="term" value="P:mRNA pseudouridine synthesis"/>
    <property type="evidence" value="ECO:0007669"/>
    <property type="project" value="TreeGrafter"/>
</dbReference>
<dbReference type="GO" id="GO:0031119">
    <property type="term" value="P:tRNA pseudouridine synthesis"/>
    <property type="evidence" value="ECO:0007669"/>
    <property type="project" value="UniProtKB-UniRule"/>
</dbReference>
<dbReference type="CDD" id="cd02573">
    <property type="entry name" value="PseudoU_synth_EcTruB"/>
    <property type="match status" value="1"/>
</dbReference>
<dbReference type="FunFam" id="3.30.2350.10:FF:000011">
    <property type="entry name" value="tRNA pseudouridine synthase B"/>
    <property type="match status" value="1"/>
</dbReference>
<dbReference type="Gene3D" id="3.30.2350.10">
    <property type="entry name" value="Pseudouridine synthase"/>
    <property type="match status" value="1"/>
</dbReference>
<dbReference type="HAMAP" id="MF_01080">
    <property type="entry name" value="TruB_bact"/>
    <property type="match status" value="1"/>
</dbReference>
<dbReference type="InterPro" id="IPR020103">
    <property type="entry name" value="PsdUridine_synth_cat_dom_sf"/>
</dbReference>
<dbReference type="InterPro" id="IPR002501">
    <property type="entry name" value="PsdUridine_synth_N"/>
</dbReference>
<dbReference type="InterPro" id="IPR014780">
    <property type="entry name" value="tRNA_psdUridine_synth_TruB"/>
</dbReference>
<dbReference type="InterPro" id="IPR032819">
    <property type="entry name" value="TruB_C"/>
</dbReference>
<dbReference type="NCBIfam" id="TIGR00431">
    <property type="entry name" value="TruB"/>
    <property type="match status" value="1"/>
</dbReference>
<dbReference type="PANTHER" id="PTHR13767:SF2">
    <property type="entry name" value="PSEUDOURIDYLATE SYNTHASE TRUB1"/>
    <property type="match status" value="1"/>
</dbReference>
<dbReference type="PANTHER" id="PTHR13767">
    <property type="entry name" value="TRNA-PSEUDOURIDINE SYNTHASE"/>
    <property type="match status" value="1"/>
</dbReference>
<dbReference type="Pfam" id="PF16198">
    <property type="entry name" value="TruB_C_2"/>
    <property type="match status" value="1"/>
</dbReference>
<dbReference type="Pfam" id="PF01509">
    <property type="entry name" value="TruB_N"/>
    <property type="match status" value="1"/>
</dbReference>
<dbReference type="SUPFAM" id="SSF55120">
    <property type="entry name" value="Pseudouridine synthase"/>
    <property type="match status" value="1"/>
</dbReference>
<feature type="chain" id="PRO_0000121789" description="tRNA pseudouridine synthase B">
    <location>
        <begin position="1"/>
        <end position="304"/>
    </location>
</feature>
<feature type="active site" description="Nucleophile" evidence="1">
    <location>
        <position position="40"/>
    </location>
</feature>
<name>TRUB_HALH5</name>
<evidence type="ECO:0000255" key="1">
    <source>
        <dbReference type="HAMAP-Rule" id="MF_01080"/>
    </source>
</evidence>
<proteinExistence type="inferred from homology"/>
<gene>
    <name evidence="1" type="primary">truB</name>
    <name type="ordered locus">BH2410</name>
</gene>
<sequence>MDMTGILPLAKPRGMTSHDCVAKLRRLLKTKKVGHTGTLDPDVYGVLPVCIGHATKVAQYMSDYPKAYEGEVTVGFSTTTEDRSGDTVETKTIQQPFVEAVVDQVLATFVGEIKQIPPMYSAVKVRGKRLYEYARAGITVERPERTVTIFSLERMSDIVYEEGVCRFRFNVSCSKGTYVRTLAVDIGKALGYPAHMSDLVRTKSGPFSLEECFTFTELEERLEQGEGSSLLLPIETAILDIPRVQVNKEIEEKIRHGAVLPQKWFNHPRFTVYNEEGALLAIYKAHPSKDGFVKPEKMLANDQQ</sequence>
<keyword id="KW-0413">Isomerase</keyword>
<keyword id="KW-1185">Reference proteome</keyword>
<keyword id="KW-0819">tRNA processing</keyword>
<comment type="function">
    <text evidence="1">Responsible for synthesis of pseudouridine from uracil-55 in the psi GC loop of transfer RNAs.</text>
</comment>
<comment type="catalytic activity">
    <reaction evidence="1">
        <text>uridine(55) in tRNA = pseudouridine(55) in tRNA</text>
        <dbReference type="Rhea" id="RHEA:42532"/>
        <dbReference type="Rhea" id="RHEA-COMP:10101"/>
        <dbReference type="Rhea" id="RHEA-COMP:10102"/>
        <dbReference type="ChEBI" id="CHEBI:65314"/>
        <dbReference type="ChEBI" id="CHEBI:65315"/>
        <dbReference type="EC" id="5.4.99.25"/>
    </reaction>
</comment>
<comment type="similarity">
    <text evidence="1">Belongs to the pseudouridine synthase TruB family. Type 1 subfamily.</text>
</comment>
<reference key="1">
    <citation type="journal article" date="2000" name="Nucleic Acids Res.">
        <title>Complete genome sequence of the alkaliphilic bacterium Bacillus halodurans and genomic sequence comparison with Bacillus subtilis.</title>
        <authorList>
            <person name="Takami H."/>
            <person name="Nakasone K."/>
            <person name="Takaki Y."/>
            <person name="Maeno G."/>
            <person name="Sasaki R."/>
            <person name="Masui N."/>
            <person name="Fuji F."/>
            <person name="Hirama C."/>
            <person name="Nakamura Y."/>
            <person name="Ogasawara N."/>
            <person name="Kuhara S."/>
            <person name="Horikoshi K."/>
        </authorList>
    </citation>
    <scope>NUCLEOTIDE SEQUENCE [LARGE SCALE GENOMIC DNA]</scope>
    <source>
        <strain>ATCC BAA-125 / DSM 18197 / FERM 7344 / JCM 9153 / C-125</strain>
    </source>
</reference>
<accession>Q9KA80</accession>